<sequence>MDMFSAPDRIPEQIRIFFKTMKQVVPAKAVCGSTVLDVAHKNGVDLEGACEGNLACSTCHVILEEPLYRKLGEPSDKEYDLIDQAFGATGTSRLGCQLRVDKSFENAVFTVPRATKNMAVDGFKPKPH</sequence>
<gene>
    <name type="ordered locus">ECU07_0600</name>
</gene>
<keyword id="KW-0001">2Fe-2S</keyword>
<keyword id="KW-0002">3D-structure</keyword>
<keyword id="KW-0249">Electron transport</keyword>
<keyword id="KW-0408">Iron</keyword>
<keyword id="KW-0411">Iron-sulfur</keyword>
<keyword id="KW-0479">Metal-binding</keyword>
<keyword id="KW-1025">Mitosome</keyword>
<keyword id="KW-1185">Reference proteome</keyword>
<keyword id="KW-0813">Transport</keyword>
<accession>Q8SV19</accession>
<protein>
    <recommendedName>
        <fullName>Adrenodoxin homolog</fullName>
    </recommendedName>
    <alternativeName>
        <fullName>Ferredoxin</fullName>
    </alternativeName>
</protein>
<organism>
    <name type="scientific">Encephalitozoon cuniculi (strain GB-M1)</name>
    <name type="common">Microsporidian parasite</name>
    <dbReference type="NCBI Taxonomy" id="284813"/>
    <lineage>
        <taxon>Eukaryota</taxon>
        <taxon>Fungi</taxon>
        <taxon>Fungi incertae sedis</taxon>
        <taxon>Microsporidia</taxon>
        <taxon>Unikaryonidae</taxon>
        <taxon>Encephalitozoon</taxon>
    </lineage>
</organism>
<evidence type="ECO:0000250" key="1"/>
<evidence type="ECO:0000255" key="2">
    <source>
        <dbReference type="PROSITE-ProRule" id="PRU00465"/>
    </source>
</evidence>
<evidence type="ECO:0000269" key="3">
    <source>
    </source>
</evidence>
<evidence type="ECO:0000305" key="4"/>
<evidence type="ECO:0007829" key="5">
    <source>
        <dbReference type="PDB" id="5UJ5"/>
    </source>
</evidence>
<name>ADRX_ENCCU</name>
<comment type="function">
    <text evidence="1">Ferredoxins are iron-sulfur proteins that transfer electrons in a wide variety of metabolic reactions.</text>
</comment>
<comment type="cofactor">
    <cofactor evidence="1">
        <name>[2Fe-2S] cluster</name>
        <dbReference type="ChEBI" id="CHEBI:190135"/>
    </cofactor>
    <text evidence="1">Binds 1 [2Fe-2S] cluster.</text>
</comment>
<comment type="subcellular location">
    <subcellularLocation>
        <location evidence="3">Mitosome</location>
    </subcellularLocation>
</comment>
<comment type="similarity">
    <text evidence="4">Belongs to the adrenodoxin/putidaredoxin family.</text>
</comment>
<proteinExistence type="evidence at protein level"/>
<feature type="chain" id="PRO_0000382938" description="Adrenodoxin homolog">
    <location>
        <begin position="1"/>
        <end position="128"/>
    </location>
</feature>
<feature type="domain" description="2Fe-2S ferredoxin-type" evidence="2">
    <location>
        <begin position="12"/>
        <end position="115"/>
    </location>
</feature>
<feature type="binding site" evidence="2">
    <location>
        <position position="50"/>
    </location>
    <ligand>
        <name>[2Fe-2S] cluster</name>
        <dbReference type="ChEBI" id="CHEBI:190135"/>
    </ligand>
</feature>
<feature type="binding site" evidence="2">
    <location>
        <position position="56"/>
    </location>
    <ligand>
        <name>[2Fe-2S] cluster</name>
        <dbReference type="ChEBI" id="CHEBI:190135"/>
    </ligand>
</feature>
<feature type="binding site" evidence="2">
    <location>
        <position position="59"/>
    </location>
    <ligand>
        <name>[2Fe-2S] cluster</name>
        <dbReference type="ChEBI" id="CHEBI:190135"/>
    </ligand>
</feature>
<feature type="binding site" evidence="2">
    <location>
        <position position="96"/>
    </location>
    <ligand>
        <name>[2Fe-2S] cluster</name>
        <dbReference type="ChEBI" id="CHEBI:190135"/>
    </ligand>
</feature>
<feature type="strand" evidence="5">
    <location>
        <begin position="14"/>
        <end position="22"/>
    </location>
</feature>
<feature type="strand" evidence="5">
    <location>
        <begin position="24"/>
        <end position="29"/>
    </location>
</feature>
<feature type="helix" evidence="5">
    <location>
        <begin position="35"/>
        <end position="42"/>
    </location>
</feature>
<feature type="helix" evidence="5">
    <location>
        <begin position="65"/>
        <end position="71"/>
    </location>
</feature>
<feature type="helix" evidence="5">
    <location>
        <begin position="76"/>
        <end position="83"/>
    </location>
</feature>
<feature type="helix" evidence="5">
    <location>
        <begin position="90"/>
        <end position="92"/>
    </location>
</feature>
<feature type="helix" evidence="5">
    <location>
        <begin position="102"/>
        <end position="104"/>
    </location>
</feature>
<feature type="strand" evidence="5">
    <location>
        <begin position="108"/>
        <end position="111"/>
    </location>
</feature>
<dbReference type="EMBL" id="AL590447">
    <property type="protein sequence ID" value="CAD25592.1"/>
    <property type="molecule type" value="Genomic_DNA"/>
</dbReference>
<dbReference type="RefSeq" id="NP_585988.1">
    <property type="nucleotide sequence ID" value="NM_001041610.1"/>
</dbReference>
<dbReference type="PDB" id="5UJ5">
    <property type="method" value="NMR"/>
    <property type="chains" value="A=1-128"/>
</dbReference>
<dbReference type="PDBsum" id="5UJ5"/>
<dbReference type="BMRB" id="Q8SV19"/>
<dbReference type="SMR" id="Q8SV19"/>
<dbReference type="STRING" id="284813.Q8SV19"/>
<dbReference type="GeneID" id="859417"/>
<dbReference type="KEGG" id="ecu:ECU07_0600"/>
<dbReference type="VEuPathDB" id="MicrosporidiaDB:ECU07_0600"/>
<dbReference type="HOGENOM" id="CLU_082632_5_0_1"/>
<dbReference type="InParanoid" id="Q8SV19"/>
<dbReference type="OMA" id="TPMEEDM"/>
<dbReference type="OrthoDB" id="268593at2759"/>
<dbReference type="Proteomes" id="UP000000819">
    <property type="component" value="Chromosome VII"/>
</dbReference>
<dbReference type="GO" id="GO:0005739">
    <property type="term" value="C:mitochondrion"/>
    <property type="evidence" value="ECO:0007669"/>
    <property type="project" value="TreeGrafter"/>
</dbReference>
<dbReference type="GO" id="GO:0032047">
    <property type="term" value="C:mitosome"/>
    <property type="evidence" value="ECO:0007669"/>
    <property type="project" value="UniProtKB-SubCell"/>
</dbReference>
<dbReference type="GO" id="GO:0051537">
    <property type="term" value="F:2 iron, 2 sulfur cluster binding"/>
    <property type="evidence" value="ECO:0007669"/>
    <property type="project" value="UniProtKB-KW"/>
</dbReference>
<dbReference type="GO" id="GO:0009055">
    <property type="term" value="F:electron transfer activity"/>
    <property type="evidence" value="ECO:0007669"/>
    <property type="project" value="TreeGrafter"/>
</dbReference>
<dbReference type="GO" id="GO:0046872">
    <property type="term" value="F:metal ion binding"/>
    <property type="evidence" value="ECO:0007669"/>
    <property type="project" value="UniProtKB-KW"/>
</dbReference>
<dbReference type="GO" id="GO:0140647">
    <property type="term" value="P:P450-containing electron transport chain"/>
    <property type="evidence" value="ECO:0007669"/>
    <property type="project" value="InterPro"/>
</dbReference>
<dbReference type="CDD" id="cd00207">
    <property type="entry name" value="fer2"/>
    <property type="match status" value="1"/>
</dbReference>
<dbReference type="Gene3D" id="3.10.20.30">
    <property type="match status" value="1"/>
</dbReference>
<dbReference type="InterPro" id="IPR036010">
    <property type="entry name" value="2Fe-2S_ferredoxin-like_sf"/>
</dbReference>
<dbReference type="InterPro" id="IPR001041">
    <property type="entry name" value="2Fe-2S_ferredoxin-type"/>
</dbReference>
<dbReference type="InterPro" id="IPR001055">
    <property type="entry name" value="Adrenodoxin-like"/>
</dbReference>
<dbReference type="InterPro" id="IPR012675">
    <property type="entry name" value="Beta-grasp_dom_sf"/>
</dbReference>
<dbReference type="PANTHER" id="PTHR23426:SF72">
    <property type="entry name" value="2FE-2S FERREDOXIN-TYPE DOMAIN-CONTAINING PROTEIN"/>
    <property type="match status" value="1"/>
</dbReference>
<dbReference type="PANTHER" id="PTHR23426">
    <property type="entry name" value="FERREDOXIN/ADRENODOXIN"/>
    <property type="match status" value="1"/>
</dbReference>
<dbReference type="Pfam" id="PF00111">
    <property type="entry name" value="Fer2"/>
    <property type="match status" value="1"/>
</dbReference>
<dbReference type="PRINTS" id="PR00355">
    <property type="entry name" value="ADRENODOXIN"/>
</dbReference>
<dbReference type="SUPFAM" id="SSF54292">
    <property type="entry name" value="2Fe-2S ferredoxin-like"/>
    <property type="match status" value="1"/>
</dbReference>
<dbReference type="PROSITE" id="PS51085">
    <property type="entry name" value="2FE2S_FER_2"/>
    <property type="match status" value="1"/>
</dbReference>
<reference key="1">
    <citation type="journal article" date="2001" name="Nature">
        <title>Genome sequence and gene compaction of the eukaryote parasite Encephalitozoon cuniculi.</title>
        <authorList>
            <person name="Katinka M.D."/>
            <person name="Duprat S."/>
            <person name="Cornillot E."/>
            <person name="Metenier G."/>
            <person name="Thomarat F."/>
            <person name="Prensier G."/>
            <person name="Barbe V."/>
            <person name="Peyretaillade E."/>
            <person name="Brottier P."/>
            <person name="Wincker P."/>
            <person name="Delbac F."/>
            <person name="El Alaoui H."/>
            <person name="Peyret P."/>
            <person name="Saurin W."/>
            <person name="Gouy M."/>
            <person name="Weissenbach J."/>
            <person name="Vivares C.P."/>
        </authorList>
    </citation>
    <scope>NUCLEOTIDE SEQUENCE [LARGE SCALE GENOMIC DNA]</scope>
    <source>
        <strain>GB-M1</strain>
    </source>
</reference>
<reference key="2">
    <citation type="journal article" date="2008" name="J. Eukaryot. Microbiol.">
        <title>Distinct localization patterns of two putative mitochondrial proteins in the microsporidian Encephalitozoon cuniculi.</title>
        <authorList>
            <person name="Williams B.A.P."/>
            <person name="Cali A."/>
            <person name="Takvorian P.M."/>
            <person name="Keeling P.J."/>
        </authorList>
    </citation>
    <scope>SUBCELLULAR LOCATION</scope>
</reference>